<sequence>MDKIREKLSNLKLEAESWQEKYEELKEKNKDLEQENVEKENQIKSLTVKNQQLEDEIEKLEAGLSDSKQTEQDNVEKENQIKSLTVKNHQLEEEIEKLEAELAESKQLSEDSHHLQSNNDNFSKKNQQLEEDLEESDTKLKETTEKLRESDLKADQLERRVAALEEQREEWERKNEELTVKYEDAKKELDEIAASLENL</sequence>
<organism>
    <name type="scientific">Saccharomyces cerevisiae (strain ATCC 204508 / S288c)</name>
    <name type="common">Baker's yeast</name>
    <dbReference type="NCBI Taxonomy" id="559292"/>
    <lineage>
        <taxon>Eukaryota</taxon>
        <taxon>Fungi</taxon>
        <taxon>Dikarya</taxon>
        <taxon>Ascomycota</taxon>
        <taxon>Saccharomycotina</taxon>
        <taxon>Saccharomycetes</taxon>
        <taxon>Saccharomycetales</taxon>
        <taxon>Saccharomycetaceae</taxon>
        <taxon>Saccharomyces</taxon>
    </lineage>
</organism>
<dbReference type="EMBL" id="M25501">
    <property type="protein sequence ID" value="AAA35174.1"/>
    <property type="molecule type" value="Genomic_DNA"/>
</dbReference>
<dbReference type="EMBL" id="DQ115393">
    <property type="protein sequence ID" value="AAZ22529.1"/>
    <property type="molecule type" value="Genomic_DNA"/>
</dbReference>
<dbReference type="EMBL" id="X86470">
    <property type="protein sequence ID" value="CAA60179.1"/>
    <property type="molecule type" value="Genomic_DNA"/>
</dbReference>
<dbReference type="EMBL" id="Z71355">
    <property type="protein sequence ID" value="CAA95953.1"/>
    <property type="molecule type" value="Genomic_DNA"/>
</dbReference>
<dbReference type="EMBL" id="AY692838">
    <property type="protein sequence ID" value="AAT92857.1"/>
    <property type="molecule type" value="Genomic_DNA"/>
</dbReference>
<dbReference type="EMBL" id="BK006947">
    <property type="protein sequence ID" value="DAA10466.1"/>
    <property type="molecule type" value="Genomic_DNA"/>
</dbReference>
<dbReference type="PIR" id="A32183">
    <property type="entry name" value="A32183"/>
</dbReference>
<dbReference type="RefSeq" id="NP_014320.1">
    <property type="nucleotide sequence ID" value="NM_001182917.1"/>
</dbReference>
<dbReference type="SMR" id="P17536"/>
<dbReference type="BioGRID" id="35744">
    <property type="interactions" value="700"/>
</dbReference>
<dbReference type="DIP" id="DIP-2992N"/>
<dbReference type="FunCoup" id="P17536">
    <property type="interactions" value="91"/>
</dbReference>
<dbReference type="IntAct" id="P17536">
    <property type="interactions" value="6"/>
</dbReference>
<dbReference type="MINT" id="P17536"/>
<dbReference type="STRING" id="4932.YNL079C"/>
<dbReference type="iPTMnet" id="P17536"/>
<dbReference type="PaxDb" id="4932-YNL079C"/>
<dbReference type="PeptideAtlas" id="P17536"/>
<dbReference type="EnsemblFungi" id="YNL079C_mRNA">
    <property type="protein sequence ID" value="YNL079C"/>
    <property type="gene ID" value="YNL079C"/>
</dbReference>
<dbReference type="GeneID" id="855645"/>
<dbReference type="KEGG" id="sce:YNL079C"/>
<dbReference type="AGR" id="SGD:S000005023"/>
<dbReference type="SGD" id="S000005023">
    <property type="gene designation" value="TPM1"/>
</dbReference>
<dbReference type="VEuPathDB" id="FungiDB:YNL079C"/>
<dbReference type="eggNOG" id="KOG1003">
    <property type="taxonomic scope" value="Eukaryota"/>
</dbReference>
<dbReference type="GeneTree" id="ENSGT00940000176442"/>
<dbReference type="HOGENOM" id="CLU_104738_1_0_1"/>
<dbReference type="InParanoid" id="P17536"/>
<dbReference type="OMA" id="EQWETKY"/>
<dbReference type="OrthoDB" id="128924at2759"/>
<dbReference type="BioCyc" id="YEAST:G3O-33108-MONOMER"/>
<dbReference type="Reactome" id="R-SCE-9013424">
    <property type="pathway name" value="RHOV GTPase cycle"/>
</dbReference>
<dbReference type="BioGRID-ORCS" id="855645">
    <property type="hits" value="8 hits in 10 CRISPR screens"/>
</dbReference>
<dbReference type="PRO" id="PR:P17536"/>
<dbReference type="Proteomes" id="UP000002311">
    <property type="component" value="Chromosome XIV"/>
</dbReference>
<dbReference type="RNAct" id="P17536">
    <property type="molecule type" value="protein"/>
</dbReference>
<dbReference type="GO" id="GO:0005884">
    <property type="term" value="C:actin filament"/>
    <property type="evidence" value="ECO:0000314"/>
    <property type="project" value="SGD"/>
</dbReference>
<dbReference type="GO" id="GO:0032432">
    <property type="term" value="C:actin filament bundle"/>
    <property type="evidence" value="ECO:0000314"/>
    <property type="project" value="SGD"/>
</dbReference>
<dbReference type="GO" id="GO:0005826">
    <property type="term" value="C:actomyosin contractile ring"/>
    <property type="evidence" value="ECO:0000318"/>
    <property type="project" value="GO_Central"/>
</dbReference>
<dbReference type="GO" id="GO:0000142">
    <property type="term" value="C:cellular bud neck contractile ring"/>
    <property type="evidence" value="ECO:0000314"/>
    <property type="project" value="SGD"/>
</dbReference>
<dbReference type="GO" id="GO:0051015">
    <property type="term" value="F:actin filament binding"/>
    <property type="evidence" value="ECO:0000318"/>
    <property type="project" value="GO_Central"/>
</dbReference>
<dbReference type="GO" id="GO:0003786">
    <property type="term" value="F:actin lateral binding"/>
    <property type="evidence" value="ECO:0000314"/>
    <property type="project" value="SGD"/>
</dbReference>
<dbReference type="GO" id="GO:0051017">
    <property type="term" value="P:actin filament bundle assembly"/>
    <property type="evidence" value="ECO:0000316"/>
    <property type="project" value="SGD"/>
</dbReference>
<dbReference type="GO" id="GO:0007015">
    <property type="term" value="P:actin filament organization"/>
    <property type="evidence" value="ECO:0000315"/>
    <property type="project" value="SGD"/>
</dbReference>
<dbReference type="GO" id="GO:0071474">
    <property type="term" value="P:cellular hyperosmotic response"/>
    <property type="evidence" value="ECO:0000315"/>
    <property type="project" value="SGD"/>
</dbReference>
<dbReference type="GO" id="GO:0030447">
    <property type="term" value="P:filamentous growth"/>
    <property type="evidence" value="ECO:0000315"/>
    <property type="project" value="SGD"/>
</dbReference>
<dbReference type="GO" id="GO:1903475">
    <property type="term" value="P:mitotic actomyosin contractile ring assembly"/>
    <property type="evidence" value="ECO:0000316"/>
    <property type="project" value="SGD"/>
</dbReference>
<dbReference type="GO" id="GO:0000281">
    <property type="term" value="P:mitotic cytokinesis"/>
    <property type="evidence" value="ECO:0000318"/>
    <property type="project" value="GO_Central"/>
</dbReference>
<dbReference type="GO" id="GO:0007124">
    <property type="term" value="P:pseudohyphal growth"/>
    <property type="evidence" value="ECO:0000315"/>
    <property type="project" value="SGD"/>
</dbReference>
<dbReference type="FunFam" id="1.20.5.340:FF:000053">
    <property type="entry name" value="Tpm1p"/>
    <property type="match status" value="1"/>
</dbReference>
<dbReference type="Gene3D" id="1.20.5.340">
    <property type="match status" value="2"/>
</dbReference>
<dbReference type="InterPro" id="IPR000533">
    <property type="entry name" value="Tropomyosin"/>
</dbReference>
<dbReference type="PANTHER" id="PTHR19269">
    <property type="entry name" value="TROPOMYOSIN"/>
    <property type="match status" value="1"/>
</dbReference>
<dbReference type="Pfam" id="PF00261">
    <property type="entry name" value="Tropomyosin"/>
    <property type="match status" value="2"/>
</dbReference>
<dbReference type="SUPFAM" id="SSF57997">
    <property type="entry name" value="Tropomyosin"/>
    <property type="match status" value="2"/>
</dbReference>
<protein>
    <recommendedName>
        <fullName>Tropomyosin-1</fullName>
    </recommendedName>
</protein>
<name>TPM1_YEAST</name>
<gene>
    <name type="primary">TPM1</name>
    <name type="ordered locus">YNL079C</name>
    <name type="ORF">N2332</name>
</gene>
<evidence type="ECO:0000250" key="1"/>
<evidence type="ECO:0000256" key="2">
    <source>
        <dbReference type="SAM" id="MobiDB-lite"/>
    </source>
</evidence>
<evidence type="ECO:0000269" key="3">
    <source>
    </source>
</evidence>
<evidence type="ECO:0000305" key="4"/>
<evidence type="ECO:0007744" key="5">
    <source>
    </source>
</evidence>
<evidence type="ECO:0007744" key="6">
    <source>
    </source>
</evidence>
<proteinExistence type="evidence at protein level"/>
<feature type="chain" id="PRO_0000205692" description="Tropomyosin-1">
    <location>
        <begin position="1"/>
        <end position="199"/>
    </location>
</feature>
<feature type="region of interest" description="Disordered" evidence="2">
    <location>
        <begin position="59"/>
        <end position="81"/>
    </location>
</feature>
<feature type="region of interest" description="Disordered" evidence="2">
    <location>
        <begin position="102"/>
        <end position="147"/>
    </location>
</feature>
<feature type="coiled-coil region" evidence="1">
    <location>
        <begin position="1"/>
        <end position="199"/>
    </location>
</feature>
<feature type="compositionally biased region" description="Basic and acidic residues" evidence="2">
    <location>
        <begin position="68"/>
        <end position="80"/>
    </location>
</feature>
<feature type="compositionally biased region" description="Basic and acidic residues" evidence="2">
    <location>
        <begin position="102"/>
        <end position="114"/>
    </location>
</feature>
<feature type="compositionally biased region" description="Polar residues" evidence="2">
    <location>
        <begin position="115"/>
        <end position="126"/>
    </location>
</feature>
<feature type="compositionally biased region" description="Basic and acidic residues" evidence="2">
    <location>
        <begin position="136"/>
        <end position="147"/>
    </location>
</feature>
<feature type="modified residue" description="Phosphoserine" evidence="5">
    <location>
        <position position="195"/>
    </location>
</feature>
<feature type="cross-link" description="Glycyl lysine isopeptide (Lys-Gly) (interchain with G-Cter in ubiquitin)" evidence="6">
    <location>
        <position position="39"/>
    </location>
</feature>
<feature type="cross-link" description="Glycyl lysine isopeptide (Lys-Gly) (interchain with G-Cter in ubiquitin)" evidence="6">
    <location>
        <position position="59"/>
    </location>
</feature>
<feature type="cross-link" description="Glycyl lysine isopeptide (Lys-Gly) (interchain with G-Cter in ubiquitin)" evidence="6">
    <location>
        <position position="187"/>
    </location>
</feature>
<comment type="subunit">
    <text evidence="1">Homodimer.</text>
</comment>
<comment type="subcellular location">
    <subcellularLocation>
        <location evidence="4">Cytoplasm</location>
        <location evidence="4">Cytoskeleton</location>
    </subcellularLocation>
</comment>
<comment type="domain">
    <text>The molecule is in a coiled coil structure that is formed by 2 polypeptide chains. The sequence exhibits a prominent seven-residues periodicity.</text>
</comment>
<comment type="miscellaneous">
    <text evidence="3">Present with 3060 molecules/cell in log phase SD medium.</text>
</comment>
<accession>P17536</accession>
<accession>D6W1A0</accession>
<accession>Q45TY1</accession>
<reference key="1">
    <citation type="journal article" date="1989" name="Cell">
        <title>Disruption of the single tropomyosin gene in yeast results in the disappearance of actin cables from the cytoskeleton.</title>
        <authorList>
            <person name="Liu H."/>
            <person name="Bretscher A."/>
        </authorList>
    </citation>
    <scope>NUCLEOTIDE SEQUENCE [GENOMIC DNA]</scope>
</reference>
<reference key="2">
    <citation type="journal article" date="2005" name="Nat. Genet.">
        <title>Quantitative trait loci mapped to single-nucleotide resolution in yeast.</title>
        <authorList>
            <person name="Deutschbauer A.M."/>
            <person name="Davis R.W."/>
        </authorList>
    </citation>
    <scope>NUCLEOTIDE SEQUENCE [GENOMIC DNA]</scope>
    <source>
        <strain>SK1</strain>
    </source>
</reference>
<reference key="3">
    <citation type="journal article" date="1996" name="Yeast">
        <title>Sequencing a cosmid clone of Saccharomyces cerevisiae chromosome XIV reveals 12 new open reading frames (ORFs) and an ancient duplication of six ORFs.</title>
        <authorList>
            <person name="Poehlmann R."/>
            <person name="Philippsen P."/>
        </authorList>
    </citation>
    <scope>NUCLEOTIDE SEQUENCE [GENOMIC DNA]</scope>
    <source>
        <strain>ATCC 96604 / S288c / FY1679</strain>
    </source>
</reference>
<reference key="4">
    <citation type="journal article" date="1997" name="Nature">
        <title>The nucleotide sequence of Saccharomyces cerevisiae chromosome XIV and its evolutionary implications.</title>
        <authorList>
            <person name="Philippsen P."/>
            <person name="Kleine K."/>
            <person name="Poehlmann R."/>
            <person name="Duesterhoeft A."/>
            <person name="Hamberg K."/>
            <person name="Hegemann J.H."/>
            <person name="Obermaier B."/>
            <person name="Urrestarazu L.A."/>
            <person name="Aert R."/>
            <person name="Albermann K."/>
            <person name="Altmann R."/>
            <person name="Andre B."/>
            <person name="Baladron V."/>
            <person name="Ballesta J.P.G."/>
            <person name="Becam A.-M."/>
            <person name="Beinhauer J.D."/>
            <person name="Boskovic J."/>
            <person name="Buitrago M.J."/>
            <person name="Bussereau F."/>
            <person name="Coster F."/>
            <person name="Crouzet M."/>
            <person name="D'Angelo M."/>
            <person name="Dal Pero F."/>
            <person name="De Antoni A."/>
            <person name="del Rey F."/>
            <person name="Doignon F."/>
            <person name="Domdey H."/>
            <person name="Dubois E."/>
            <person name="Fiedler T.A."/>
            <person name="Fleig U."/>
            <person name="Floeth M."/>
            <person name="Fritz C."/>
            <person name="Gaillardin C."/>
            <person name="Garcia-Cantalejo J.M."/>
            <person name="Glansdorff N."/>
            <person name="Goffeau A."/>
            <person name="Gueldener U."/>
            <person name="Herbert C.J."/>
            <person name="Heumann K."/>
            <person name="Heuss-Neitzel D."/>
            <person name="Hilbert H."/>
            <person name="Hinni K."/>
            <person name="Iraqui Houssaini I."/>
            <person name="Jacquet M."/>
            <person name="Jimenez A."/>
            <person name="Jonniaux J.-L."/>
            <person name="Karpfinger-Hartl L."/>
            <person name="Lanfranchi G."/>
            <person name="Lepingle A."/>
            <person name="Levesque H."/>
            <person name="Lyck R."/>
            <person name="Maftahi M."/>
            <person name="Mallet L."/>
            <person name="Maurer C.T.C."/>
            <person name="Messenguy F."/>
            <person name="Mewes H.-W."/>
            <person name="Moestl D."/>
            <person name="Nasr F."/>
            <person name="Nicaud J.-M."/>
            <person name="Niedenthal R.K."/>
            <person name="Pandolfo D."/>
            <person name="Pierard A."/>
            <person name="Piravandi E."/>
            <person name="Planta R.J."/>
            <person name="Pohl T.M."/>
            <person name="Purnelle B."/>
            <person name="Rebischung C."/>
            <person name="Remacha M.A."/>
            <person name="Revuelta J.L."/>
            <person name="Rinke M."/>
            <person name="Saiz J.E."/>
            <person name="Sartorello F."/>
            <person name="Scherens B."/>
            <person name="Sen-Gupta M."/>
            <person name="Soler-Mira A."/>
            <person name="Urbanus J.H.M."/>
            <person name="Valle G."/>
            <person name="Van Dyck L."/>
            <person name="Verhasselt P."/>
            <person name="Vierendeels F."/>
            <person name="Vissers S."/>
            <person name="Voet M."/>
            <person name="Volckaert G."/>
            <person name="Wach A."/>
            <person name="Wambutt R."/>
            <person name="Wedler H."/>
            <person name="Zollner A."/>
            <person name="Hani J."/>
        </authorList>
    </citation>
    <scope>NUCLEOTIDE SEQUENCE [LARGE SCALE GENOMIC DNA]</scope>
    <source>
        <strain>ATCC 204508 / S288c</strain>
    </source>
</reference>
<reference key="5">
    <citation type="journal article" date="2014" name="G3 (Bethesda)">
        <title>The reference genome sequence of Saccharomyces cerevisiae: Then and now.</title>
        <authorList>
            <person name="Engel S.R."/>
            <person name="Dietrich F.S."/>
            <person name="Fisk D.G."/>
            <person name="Binkley G."/>
            <person name="Balakrishnan R."/>
            <person name="Costanzo M.C."/>
            <person name="Dwight S.S."/>
            <person name="Hitz B.C."/>
            <person name="Karra K."/>
            <person name="Nash R.S."/>
            <person name="Weng S."/>
            <person name="Wong E.D."/>
            <person name="Lloyd P."/>
            <person name="Skrzypek M.S."/>
            <person name="Miyasato S.R."/>
            <person name="Simison M."/>
            <person name="Cherry J.M."/>
        </authorList>
    </citation>
    <scope>GENOME REANNOTATION</scope>
    <source>
        <strain>ATCC 204508 / S288c</strain>
    </source>
</reference>
<reference key="6">
    <citation type="journal article" date="2007" name="Genome Res.">
        <title>Approaching a complete repository of sequence-verified protein-encoding clones for Saccharomyces cerevisiae.</title>
        <authorList>
            <person name="Hu Y."/>
            <person name="Rolfs A."/>
            <person name="Bhullar B."/>
            <person name="Murthy T.V.S."/>
            <person name="Zhu C."/>
            <person name="Berger M.F."/>
            <person name="Camargo A.A."/>
            <person name="Kelley F."/>
            <person name="McCarron S."/>
            <person name="Jepson D."/>
            <person name="Richardson A."/>
            <person name="Raphael J."/>
            <person name="Moreira D."/>
            <person name="Taycher E."/>
            <person name="Zuo D."/>
            <person name="Mohr S."/>
            <person name="Kane M.F."/>
            <person name="Williamson J."/>
            <person name="Simpson A.J.G."/>
            <person name="Bulyk M.L."/>
            <person name="Harlow E."/>
            <person name="Marsischky G."/>
            <person name="Kolodner R.D."/>
            <person name="LaBaer J."/>
        </authorList>
    </citation>
    <scope>NUCLEOTIDE SEQUENCE [GENOMIC DNA]</scope>
    <source>
        <strain>ATCC 204508 / S288c</strain>
    </source>
</reference>
<reference key="7">
    <citation type="journal article" date="2003" name="Nature">
        <title>Global analysis of protein expression in yeast.</title>
        <authorList>
            <person name="Ghaemmaghami S."/>
            <person name="Huh W.-K."/>
            <person name="Bower K."/>
            <person name="Howson R.W."/>
            <person name="Belle A."/>
            <person name="Dephoure N."/>
            <person name="O'Shea E.K."/>
            <person name="Weissman J.S."/>
        </authorList>
    </citation>
    <scope>LEVEL OF PROTEIN EXPRESSION [LARGE SCALE ANALYSIS]</scope>
</reference>
<reference key="8">
    <citation type="journal article" date="2008" name="Mol. Cell. Proteomics">
        <title>A multidimensional chromatography technology for in-depth phosphoproteome analysis.</title>
        <authorList>
            <person name="Albuquerque C.P."/>
            <person name="Smolka M.B."/>
            <person name="Payne S.H."/>
            <person name="Bafna V."/>
            <person name="Eng J."/>
            <person name="Zhou H."/>
        </authorList>
    </citation>
    <scope>PHOSPHORYLATION [LARGE SCALE ANALYSIS] AT SER-195</scope>
    <scope>IDENTIFICATION BY MASS SPECTROMETRY [LARGE SCALE ANALYSIS]</scope>
</reference>
<reference key="9">
    <citation type="journal article" date="2012" name="Proteomics">
        <title>Sites of ubiquitin attachment in Saccharomyces cerevisiae.</title>
        <authorList>
            <person name="Starita L.M."/>
            <person name="Lo R.S."/>
            <person name="Eng J.K."/>
            <person name="von Haller P.D."/>
            <person name="Fields S."/>
        </authorList>
    </citation>
    <scope>UBIQUITINATION [LARGE SCALE ANALYSIS] AT LYS-39; LYS-59 AND LYS-187</scope>
    <scope>IDENTIFICATION BY MASS SPECTROMETRY [LARGE SCALE ANALYSIS]</scope>
</reference>
<keyword id="KW-0175">Coiled coil</keyword>
<keyword id="KW-0963">Cytoplasm</keyword>
<keyword id="KW-0206">Cytoskeleton</keyword>
<keyword id="KW-1017">Isopeptide bond</keyword>
<keyword id="KW-0597">Phosphoprotein</keyword>
<keyword id="KW-1185">Reference proteome</keyword>
<keyword id="KW-0677">Repeat</keyword>
<keyword id="KW-0832">Ubl conjugation</keyword>